<organism>
    <name type="scientific">Lactiplantibacillus plantarum (strain ATCC BAA-793 / NCIMB 8826 / WCFS1)</name>
    <name type="common">Lactobacillus plantarum</name>
    <dbReference type="NCBI Taxonomy" id="220668"/>
    <lineage>
        <taxon>Bacteria</taxon>
        <taxon>Bacillati</taxon>
        <taxon>Bacillota</taxon>
        <taxon>Bacilli</taxon>
        <taxon>Lactobacillales</taxon>
        <taxon>Lactobacillaceae</taxon>
        <taxon>Lactiplantibacillus</taxon>
    </lineage>
</organism>
<feature type="chain" id="PRO_0000167476" description="Ribosome-recycling factor">
    <location>
        <begin position="1"/>
        <end position="187"/>
    </location>
</feature>
<keyword id="KW-0963">Cytoplasm</keyword>
<keyword id="KW-0648">Protein biosynthesis</keyword>
<keyword id="KW-1185">Reference proteome</keyword>
<accession>Q88VJ7</accession>
<accession>F9UQ07</accession>
<name>RRF_LACPL</name>
<evidence type="ECO:0000255" key="1">
    <source>
        <dbReference type="HAMAP-Rule" id="MF_00040"/>
    </source>
</evidence>
<protein>
    <recommendedName>
        <fullName evidence="1">Ribosome-recycling factor</fullName>
        <shortName evidence="1">RRF</shortName>
    </recommendedName>
    <alternativeName>
        <fullName evidence="1">Ribosome-releasing factor</fullName>
    </alternativeName>
</protein>
<sequence length="187" mass="20594">MAITEPILKEAQERMKKAEAALQRELGNIRAGRANASLLNRISADYYGAQTPLNQMAAITVPEPRVLMVTPFDKSALKEIEKAILASDLGISPANDGSAIRLVIPQLTEERRKELAKDVKAEGERAKVAVRNVRRDAMEALKKGHKDGQFTDDQLHQLEDQAQKLTDQAGKDVDAIVADKEKEILEG</sequence>
<reference key="1">
    <citation type="journal article" date="2003" name="Proc. Natl. Acad. Sci. U.S.A.">
        <title>Complete genome sequence of Lactobacillus plantarum WCFS1.</title>
        <authorList>
            <person name="Kleerebezem M."/>
            <person name="Boekhorst J."/>
            <person name="van Kranenburg R."/>
            <person name="Molenaar D."/>
            <person name="Kuipers O.P."/>
            <person name="Leer R."/>
            <person name="Tarchini R."/>
            <person name="Peters S.A."/>
            <person name="Sandbrink H.M."/>
            <person name="Fiers M.W.E.J."/>
            <person name="Stiekema W."/>
            <person name="Klein Lankhorst R.M."/>
            <person name="Bron P.A."/>
            <person name="Hoffer S.M."/>
            <person name="Nierop Groot M.N."/>
            <person name="Kerkhoven R."/>
            <person name="De Vries M."/>
            <person name="Ursing B."/>
            <person name="De Vos W.M."/>
            <person name="Siezen R.J."/>
        </authorList>
    </citation>
    <scope>NUCLEOTIDE SEQUENCE [LARGE SCALE GENOMIC DNA]</scope>
    <source>
        <strain>ATCC BAA-793 / NCIMB 8826 / WCFS1</strain>
    </source>
</reference>
<reference key="2">
    <citation type="journal article" date="2012" name="J. Bacteriol.">
        <title>Complete resequencing and reannotation of the Lactobacillus plantarum WCFS1 genome.</title>
        <authorList>
            <person name="Siezen R.J."/>
            <person name="Francke C."/>
            <person name="Renckens B."/>
            <person name="Boekhorst J."/>
            <person name="Wels M."/>
            <person name="Kleerebezem M."/>
            <person name="van Hijum S.A."/>
        </authorList>
    </citation>
    <scope>NUCLEOTIDE SEQUENCE [LARGE SCALE GENOMIC DNA]</scope>
    <scope>GENOME REANNOTATION</scope>
    <source>
        <strain>ATCC BAA-793 / NCIMB 8826 / WCFS1</strain>
    </source>
</reference>
<dbReference type="EMBL" id="AL935263">
    <property type="protein sequence ID" value="CCC79296.1"/>
    <property type="molecule type" value="Genomic_DNA"/>
</dbReference>
<dbReference type="RefSeq" id="WP_003640736.1">
    <property type="nucleotide sequence ID" value="NC_004567.2"/>
</dbReference>
<dbReference type="RefSeq" id="YP_004889810.1">
    <property type="nucleotide sequence ID" value="NC_004567.2"/>
</dbReference>
<dbReference type="SMR" id="Q88VJ7"/>
<dbReference type="STRING" id="220668.lp_2052"/>
<dbReference type="EnsemblBacteria" id="CCC79296">
    <property type="protein sequence ID" value="CCC79296"/>
    <property type="gene ID" value="lp_2052"/>
</dbReference>
<dbReference type="GeneID" id="89669333"/>
<dbReference type="KEGG" id="lpl:lp_2052"/>
<dbReference type="PATRIC" id="fig|220668.9.peg.1737"/>
<dbReference type="eggNOG" id="COG0233">
    <property type="taxonomic scope" value="Bacteria"/>
</dbReference>
<dbReference type="HOGENOM" id="CLU_073981_2_0_9"/>
<dbReference type="OrthoDB" id="9804006at2"/>
<dbReference type="PhylomeDB" id="Q88VJ7"/>
<dbReference type="Proteomes" id="UP000000432">
    <property type="component" value="Chromosome"/>
</dbReference>
<dbReference type="GO" id="GO:0005737">
    <property type="term" value="C:cytoplasm"/>
    <property type="evidence" value="ECO:0007669"/>
    <property type="project" value="UniProtKB-SubCell"/>
</dbReference>
<dbReference type="GO" id="GO:0043023">
    <property type="term" value="F:ribosomal large subunit binding"/>
    <property type="evidence" value="ECO:0007669"/>
    <property type="project" value="TreeGrafter"/>
</dbReference>
<dbReference type="GO" id="GO:0006415">
    <property type="term" value="P:translational termination"/>
    <property type="evidence" value="ECO:0007669"/>
    <property type="project" value="UniProtKB-UniRule"/>
</dbReference>
<dbReference type="CDD" id="cd00520">
    <property type="entry name" value="RRF"/>
    <property type="match status" value="1"/>
</dbReference>
<dbReference type="FunFam" id="1.10.132.20:FF:000001">
    <property type="entry name" value="Ribosome-recycling factor"/>
    <property type="match status" value="1"/>
</dbReference>
<dbReference type="FunFam" id="3.30.1360.40:FF:000001">
    <property type="entry name" value="Ribosome-recycling factor"/>
    <property type="match status" value="1"/>
</dbReference>
<dbReference type="Gene3D" id="3.30.1360.40">
    <property type="match status" value="1"/>
</dbReference>
<dbReference type="Gene3D" id="1.10.132.20">
    <property type="entry name" value="Ribosome-recycling factor"/>
    <property type="match status" value="1"/>
</dbReference>
<dbReference type="HAMAP" id="MF_00040">
    <property type="entry name" value="RRF"/>
    <property type="match status" value="1"/>
</dbReference>
<dbReference type="InterPro" id="IPR002661">
    <property type="entry name" value="Ribosome_recyc_fac"/>
</dbReference>
<dbReference type="InterPro" id="IPR023584">
    <property type="entry name" value="Ribosome_recyc_fac_dom"/>
</dbReference>
<dbReference type="InterPro" id="IPR036191">
    <property type="entry name" value="RRF_sf"/>
</dbReference>
<dbReference type="NCBIfam" id="TIGR00496">
    <property type="entry name" value="frr"/>
    <property type="match status" value="1"/>
</dbReference>
<dbReference type="PANTHER" id="PTHR20982:SF3">
    <property type="entry name" value="MITOCHONDRIAL RIBOSOME RECYCLING FACTOR PSEUDO 1"/>
    <property type="match status" value="1"/>
</dbReference>
<dbReference type="PANTHER" id="PTHR20982">
    <property type="entry name" value="RIBOSOME RECYCLING FACTOR"/>
    <property type="match status" value="1"/>
</dbReference>
<dbReference type="Pfam" id="PF01765">
    <property type="entry name" value="RRF"/>
    <property type="match status" value="1"/>
</dbReference>
<dbReference type="SUPFAM" id="SSF55194">
    <property type="entry name" value="Ribosome recycling factor, RRF"/>
    <property type="match status" value="1"/>
</dbReference>
<gene>
    <name evidence="1" type="primary">frr</name>
    <name type="ordered locus">lp_2052</name>
</gene>
<comment type="function">
    <text evidence="1">Responsible for the release of ribosomes from messenger RNA at the termination of protein biosynthesis. May increase the efficiency of translation by recycling ribosomes from one round of translation to another.</text>
</comment>
<comment type="subcellular location">
    <subcellularLocation>
        <location evidence="1">Cytoplasm</location>
    </subcellularLocation>
</comment>
<comment type="similarity">
    <text evidence="1">Belongs to the RRF family.</text>
</comment>
<proteinExistence type="inferred from homology"/>